<sequence length="344" mass="39323">MLTERQLLILQVIIDDFIRSGQPVGSRTLSKKHEIALSSATIRNEMADLEELGYIEKTHVSSGRVPSEKGYRYYVDHLLSPQRLTKDDIQKIKSIFAERIYELEKVVQKSAQILSDLTNYTSIALGPAVKENKLKRIQIIPLNQQTAVAIIVTDTGHVENHVITVPASVNPSDLEKMVNIFNERLIGVPLVDLKDKIYKKVADVLRKHIRNYDSMLQTIVETLDIPQEEKMFFAGKTNMLNQPEFNDIQKIRPLMKMIEQEKDFYRLLRKHNRKGIQVTIGRENQLSEMENCSLITATYSIGDEQLGTIAILGPTRMEYSRVITILNRVASDLSIALTKWYQNG</sequence>
<dbReference type="EMBL" id="Y09446">
    <property type="protein sequence ID" value="CAA70594.1"/>
    <property type="status" value="ALT_INIT"/>
    <property type="molecule type" value="Genomic_DNA"/>
</dbReference>
<dbReference type="EMBL" id="X90709">
    <property type="protein sequence ID" value="CAA62237.1"/>
    <property type="molecule type" value="Genomic_DNA"/>
</dbReference>
<dbReference type="PIR" id="PC4165">
    <property type="entry name" value="PC4165"/>
</dbReference>
<dbReference type="SMR" id="Q45550"/>
<dbReference type="GO" id="GO:0003677">
    <property type="term" value="F:DNA binding"/>
    <property type="evidence" value="ECO:0007669"/>
    <property type="project" value="InterPro"/>
</dbReference>
<dbReference type="GO" id="GO:0045892">
    <property type="term" value="P:negative regulation of DNA-templated transcription"/>
    <property type="evidence" value="ECO:0007669"/>
    <property type="project" value="UniProtKB-UniRule"/>
</dbReference>
<dbReference type="FunFam" id="1.10.10.10:FF:000049">
    <property type="entry name" value="Heat-inducible transcription repressor HrcA"/>
    <property type="match status" value="1"/>
</dbReference>
<dbReference type="Gene3D" id="3.30.450.40">
    <property type="match status" value="1"/>
</dbReference>
<dbReference type="Gene3D" id="3.30.390.60">
    <property type="entry name" value="Heat-inducible transcription repressor hrca homolog, domain 3"/>
    <property type="match status" value="1"/>
</dbReference>
<dbReference type="Gene3D" id="1.10.10.10">
    <property type="entry name" value="Winged helix-like DNA-binding domain superfamily/Winged helix DNA-binding domain"/>
    <property type="match status" value="1"/>
</dbReference>
<dbReference type="HAMAP" id="MF_00081">
    <property type="entry name" value="HrcA"/>
    <property type="match status" value="1"/>
</dbReference>
<dbReference type="InterPro" id="IPR029016">
    <property type="entry name" value="GAF-like_dom_sf"/>
</dbReference>
<dbReference type="InterPro" id="IPR002571">
    <property type="entry name" value="HrcA"/>
</dbReference>
<dbReference type="InterPro" id="IPR021153">
    <property type="entry name" value="HrcA_C"/>
</dbReference>
<dbReference type="InterPro" id="IPR036388">
    <property type="entry name" value="WH-like_DNA-bd_sf"/>
</dbReference>
<dbReference type="InterPro" id="IPR036390">
    <property type="entry name" value="WH_DNA-bd_sf"/>
</dbReference>
<dbReference type="InterPro" id="IPR023120">
    <property type="entry name" value="WHTH_transcript_rep_HrcA_IDD"/>
</dbReference>
<dbReference type="NCBIfam" id="TIGR00331">
    <property type="entry name" value="hrcA"/>
    <property type="match status" value="1"/>
</dbReference>
<dbReference type="PANTHER" id="PTHR34824">
    <property type="entry name" value="HEAT-INDUCIBLE TRANSCRIPTION REPRESSOR HRCA"/>
    <property type="match status" value="1"/>
</dbReference>
<dbReference type="PANTHER" id="PTHR34824:SF1">
    <property type="entry name" value="HEAT-INDUCIBLE TRANSCRIPTION REPRESSOR HRCA"/>
    <property type="match status" value="1"/>
</dbReference>
<dbReference type="Pfam" id="PF01628">
    <property type="entry name" value="HrcA"/>
    <property type="match status" value="1"/>
</dbReference>
<dbReference type="PIRSF" id="PIRSF005485">
    <property type="entry name" value="HrcA"/>
    <property type="match status" value="1"/>
</dbReference>
<dbReference type="SUPFAM" id="SSF55781">
    <property type="entry name" value="GAF domain-like"/>
    <property type="match status" value="1"/>
</dbReference>
<dbReference type="SUPFAM" id="SSF46785">
    <property type="entry name" value="Winged helix' DNA-binding domain"/>
    <property type="match status" value="1"/>
</dbReference>
<reference key="1">
    <citation type="journal article" date="1997" name="Gene">
        <title>Cloning and sequencing of the hrcA gene of Bacillus stearothermophilus.</title>
        <authorList>
            <person name="Mogk A."/>
            <person name="Schumann W."/>
        </authorList>
    </citation>
    <scope>NUCLEOTIDE SEQUENCE [GENOMIC DNA]</scope>
    <source>
        <strain>NUB36</strain>
    </source>
</reference>
<reference key="2">
    <citation type="journal article" date="1996" name="Gene">
        <title>Cloning and sequencing of the dnaK operon of Bacillus stearothermophilus.</title>
        <authorList>
            <person name="Herbort M."/>
            <person name="Schoen U."/>
            <person name="Lang J."/>
            <person name="Schumann W."/>
        </authorList>
    </citation>
    <scope>NUCLEOTIDE SEQUENCE [GENOMIC DNA] OF 292-344</scope>
    <source>
        <strain>NUB36</strain>
    </source>
</reference>
<organism>
    <name type="scientific">Geobacillus stearothermophilus</name>
    <name type="common">Bacillus stearothermophilus</name>
    <dbReference type="NCBI Taxonomy" id="1422"/>
    <lineage>
        <taxon>Bacteria</taxon>
        <taxon>Bacillati</taxon>
        <taxon>Bacillota</taxon>
        <taxon>Bacilli</taxon>
        <taxon>Bacillales</taxon>
        <taxon>Anoxybacillaceae</taxon>
        <taxon>Geobacillus</taxon>
    </lineage>
</organism>
<accession>Q45550</accession>
<proteinExistence type="inferred from homology"/>
<gene>
    <name evidence="1" type="primary">hrcA</name>
</gene>
<comment type="function">
    <text>Negative regulator of class I heat shock genes (grpE-dnaK-dnaJ and groELS operons). Prevents heat-shock induction of these operons.</text>
</comment>
<comment type="similarity">
    <text evidence="1">Belongs to the HrcA family.</text>
</comment>
<comment type="sequence caution" evidence="2">
    <conflict type="erroneous initiation">
        <sequence resource="EMBL-CDS" id="CAA70594"/>
    </conflict>
</comment>
<evidence type="ECO:0000255" key="1">
    <source>
        <dbReference type="HAMAP-Rule" id="MF_00081"/>
    </source>
</evidence>
<evidence type="ECO:0000305" key="2"/>
<feature type="chain" id="PRO_0000182448" description="Heat-inducible transcription repressor HrcA">
    <location>
        <begin position="1"/>
        <end position="344"/>
    </location>
</feature>
<protein>
    <recommendedName>
        <fullName evidence="1">Heat-inducible transcription repressor HrcA</fullName>
    </recommendedName>
</protein>
<keyword id="KW-0678">Repressor</keyword>
<keyword id="KW-0346">Stress response</keyword>
<keyword id="KW-0804">Transcription</keyword>
<keyword id="KW-0805">Transcription regulation</keyword>
<name>HRCA_GEOSE</name>